<protein>
    <recommendedName>
        <fullName>SAGA complex subunit Sus1</fullName>
    </recommendedName>
    <alternativeName>
        <fullName evidence="2">Transcription and mRNA export factor sus1</fullName>
    </alternativeName>
</protein>
<proteinExistence type="evidence at protein level"/>
<organism>
    <name type="scientific">Schizosaccharomyces pombe (strain 972 / ATCC 24843)</name>
    <name type="common">Fission yeast</name>
    <dbReference type="NCBI Taxonomy" id="284812"/>
    <lineage>
        <taxon>Eukaryota</taxon>
        <taxon>Fungi</taxon>
        <taxon>Dikarya</taxon>
        <taxon>Ascomycota</taxon>
        <taxon>Taphrinomycotina</taxon>
        <taxon>Schizosaccharomycetes</taxon>
        <taxon>Schizosaccharomycetales</taxon>
        <taxon>Schizosaccharomycetaceae</taxon>
        <taxon>Schizosaccharomyces</taxon>
    </lineage>
</organism>
<evidence type="ECO:0000250" key="1">
    <source>
        <dbReference type="UniProtKB" id="Q6WNK7"/>
    </source>
</evidence>
<evidence type="ECO:0000255" key="2">
    <source>
        <dbReference type="HAMAP-Rule" id="MF_03046"/>
    </source>
</evidence>
<evidence type="ECO:0000269" key="3">
    <source>
    </source>
</evidence>
<accession>Q7LL15</accession>
<name>SUS1_SCHPO</name>
<sequence length="108" mass="12313">MYDLIFSTKMTTEKIVEQLYETGDYERLANELEYKLESCGWTTQLRDYTRGIVNSDSKIDFQKLYESALQSATESIPDSVKMDLLKDIKTCVLKLANPPESANGGNKM</sequence>
<feature type="chain" id="PRO_0000350748" description="SAGA complex subunit Sus1">
    <location>
        <begin position="1"/>
        <end position="108"/>
    </location>
</feature>
<keyword id="KW-0010">Activator</keyword>
<keyword id="KW-0156">Chromatin regulator</keyword>
<keyword id="KW-0963">Cytoplasm</keyword>
<keyword id="KW-0509">mRNA transport</keyword>
<keyword id="KW-0539">Nucleus</keyword>
<keyword id="KW-0653">Protein transport</keyword>
<keyword id="KW-1185">Reference proteome</keyword>
<keyword id="KW-0804">Transcription</keyword>
<keyword id="KW-0805">Transcription regulation</keyword>
<keyword id="KW-0811">Translocation</keyword>
<keyword id="KW-0813">Transport</keyword>
<reference key="1">
    <citation type="journal article" date="2002" name="Nature">
        <title>The genome sequence of Schizosaccharomyces pombe.</title>
        <authorList>
            <person name="Wood V."/>
            <person name="Gwilliam R."/>
            <person name="Rajandream M.A."/>
            <person name="Lyne M.H."/>
            <person name="Lyne R."/>
            <person name="Stewart A."/>
            <person name="Sgouros J.G."/>
            <person name="Peat N."/>
            <person name="Hayles J."/>
            <person name="Baker S.G."/>
            <person name="Basham D."/>
            <person name="Bowman S."/>
            <person name="Brooks K."/>
            <person name="Brown D."/>
            <person name="Brown S."/>
            <person name="Chillingworth T."/>
            <person name="Churcher C.M."/>
            <person name="Collins M."/>
            <person name="Connor R."/>
            <person name="Cronin A."/>
            <person name="Davis P."/>
            <person name="Feltwell T."/>
            <person name="Fraser A."/>
            <person name="Gentles S."/>
            <person name="Goble A."/>
            <person name="Hamlin N."/>
            <person name="Harris D.E."/>
            <person name="Hidalgo J."/>
            <person name="Hodgson G."/>
            <person name="Holroyd S."/>
            <person name="Hornsby T."/>
            <person name="Howarth S."/>
            <person name="Huckle E.J."/>
            <person name="Hunt S."/>
            <person name="Jagels K."/>
            <person name="James K.D."/>
            <person name="Jones L."/>
            <person name="Jones M."/>
            <person name="Leather S."/>
            <person name="McDonald S."/>
            <person name="McLean J."/>
            <person name="Mooney P."/>
            <person name="Moule S."/>
            <person name="Mungall K.L."/>
            <person name="Murphy L.D."/>
            <person name="Niblett D."/>
            <person name="Odell C."/>
            <person name="Oliver K."/>
            <person name="O'Neil S."/>
            <person name="Pearson D."/>
            <person name="Quail M.A."/>
            <person name="Rabbinowitsch E."/>
            <person name="Rutherford K.M."/>
            <person name="Rutter S."/>
            <person name="Saunders D."/>
            <person name="Seeger K."/>
            <person name="Sharp S."/>
            <person name="Skelton J."/>
            <person name="Simmonds M.N."/>
            <person name="Squares R."/>
            <person name="Squares S."/>
            <person name="Stevens K."/>
            <person name="Taylor K."/>
            <person name="Taylor R.G."/>
            <person name="Tivey A."/>
            <person name="Walsh S.V."/>
            <person name="Warren T."/>
            <person name="Whitehead S."/>
            <person name="Woodward J.R."/>
            <person name="Volckaert G."/>
            <person name="Aert R."/>
            <person name="Robben J."/>
            <person name="Grymonprez B."/>
            <person name="Weltjens I."/>
            <person name="Vanstreels E."/>
            <person name="Rieger M."/>
            <person name="Schaefer M."/>
            <person name="Mueller-Auer S."/>
            <person name="Gabel C."/>
            <person name="Fuchs M."/>
            <person name="Duesterhoeft A."/>
            <person name="Fritzc C."/>
            <person name="Holzer E."/>
            <person name="Moestl D."/>
            <person name="Hilbert H."/>
            <person name="Borzym K."/>
            <person name="Langer I."/>
            <person name="Beck A."/>
            <person name="Lehrach H."/>
            <person name="Reinhardt R."/>
            <person name="Pohl T.M."/>
            <person name="Eger P."/>
            <person name="Zimmermann W."/>
            <person name="Wedler H."/>
            <person name="Wambutt R."/>
            <person name="Purnelle B."/>
            <person name="Goffeau A."/>
            <person name="Cadieu E."/>
            <person name="Dreano S."/>
            <person name="Gloux S."/>
            <person name="Lelaure V."/>
            <person name="Mottier S."/>
            <person name="Galibert F."/>
            <person name="Aves S.J."/>
            <person name="Xiang Z."/>
            <person name="Hunt C."/>
            <person name="Moore K."/>
            <person name="Hurst S.M."/>
            <person name="Lucas M."/>
            <person name="Rochet M."/>
            <person name="Gaillardin C."/>
            <person name="Tallada V.A."/>
            <person name="Garzon A."/>
            <person name="Thode G."/>
            <person name="Daga R.R."/>
            <person name="Cruzado L."/>
            <person name="Jimenez J."/>
            <person name="Sanchez M."/>
            <person name="del Rey F."/>
            <person name="Benito J."/>
            <person name="Dominguez A."/>
            <person name="Revuelta J.L."/>
            <person name="Moreno S."/>
            <person name="Armstrong J."/>
            <person name="Forsburg S.L."/>
            <person name="Cerutti L."/>
            <person name="Lowe T."/>
            <person name="McCombie W.R."/>
            <person name="Paulsen I."/>
            <person name="Potashkin J."/>
            <person name="Shpakovski G.V."/>
            <person name="Ussery D."/>
            <person name="Barrell B.G."/>
            <person name="Nurse P."/>
        </authorList>
    </citation>
    <scope>NUCLEOTIDE SEQUENCE [LARGE SCALE GENOMIC DNA]</scope>
    <source>
        <strain>972 / ATCC 24843</strain>
    </source>
</reference>
<reference key="2">
    <citation type="journal article" date="2008" name="Genes Dev.">
        <title>The S. pombe SAGA complex controls the switch from proliferation to sexual differentiation through the opposing roles of its subunits Gcn5 and Spt8.</title>
        <authorList>
            <person name="Helmlinger D."/>
            <person name="Marguerat S."/>
            <person name="Villen J."/>
            <person name="Gygi S.P."/>
            <person name="Bahler J."/>
            <person name="Winston F."/>
        </authorList>
    </citation>
    <scope>IDENTIFICATION IN THE SAGA COMPLEX</scope>
    <scope>IDENTIFICATION BY MASS SPECTROMETRY</scope>
</reference>
<gene>
    <name type="primary">sus1</name>
    <name type="ORF">SPBC6B1.12c</name>
</gene>
<comment type="function">
    <text evidence="1">Involved in mRNA export coupled transcription activation by association with both the TREX-2 and the SAGA complexes. SAGA acts as a general cofactor required for essentially all RNA polymerase II transcription. At the promoters, SAGA is required for transcription pre-initiation complex (PIC) recruitment. It influences RNA polymerase II transcriptional activity through different activities such as TBP interaction (via core/TAF module) and promoter selectivity, interaction with transcription activators (via Tra1/SPT module), and chromatin modification through histone acetylation (via HAT module) and deubiquitination (via DUB module). SAGA preferentially acetylates histones H3 (to form H3K9ac, H3K14ac, H3K18ac and H3K23ac) and H2B and deubiquitinates histone H2B. SAGA interacts with DNA via upstream activating sequences (UASs). Within the SAGA complex, participates in a subcomplex with SGF11, SGF73 and UBP8 required for deubiquitination of H2B and for the maintenance of steady-state H3 methylation levels. The TREX-2 complex functions in docking export-competent ribonucleoprotein particles (mRNPs) to the nuclear entrance of the nuclear pore complex (nuclear basket), by association with components of the nuclear mRNA export machinery (MEX67-MTR2 and SUB2) in the nucleoplasm and the nucleoporin NUP1 at the nuclear basket. TREX-2 participates in mRNA export and accurate chromatin positioning in the nucleus by tethering genes to the nuclear periphery.</text>
</comment>
<comment type="subunit">
    <text evidence="1 3">Component of the 1.8 MDa SAGA (Spt-Ada-Gcn5 acetyltransferase) complex, which is composed of 19 subunits tra1, spt7, taf5, ngg1/ada3, sgf73, spt20, spt8, taf12, taf6, hfi1/ada1, ubp8, gcn5, ada2, spt3, sgf29, taf10, taf9, sgf11 and sus1 (PubMed:19056896). The SAGA complex is composed of 4 modules, namely the HAT (histone acetyltransferase) module (gcn5, ada2, ngg1/ada3 and sgf29), the DUB (deubiquitinating) module (ubp8, sgf11, sgf73 and sus1), the core or TAF (TBP-associated factor) module (taf5, taf6, taf9, taf10 and taf12), and the Tra1 or SPT (Suppressor of Ty) module (tra1, hfi1/ada1, spt3, spt7, spt8 and spt20). The Tra1/SPT module binds activators, the core module recruits TBP (TATA-binding protein), the HAT module contains the histone H3 acetyltransferase gcn5, and the DUB module comprises the histone H2B deubiquitinase ubp8 (By similarity). Component of the nuclear pore complex (NPC)-associated TREX-2 complex (transcription and export complex 2), composed of at least sus1, sac3, thp1, sem1, and cdc31. TREX-2 contains 2 sus1 chains. The TREX-2 complex interacts with the mRNA export factors mex67, mtr2 and sub2, and the nucleoporin nup1 (By similarity).</text>
</comment>
<comment type="subcellular location">
    <subcellularLocation>
        <location evidence="2">Nucleus</location>
        <location evidence="2">Nucleoplasm</location>
    </subcellularLocation>
    <subcellularLocation>
        <location evidence="2">Cytoplasm</location>
        <location evidence="2">P-body</location>
    </subcellularLocation>
</comment>
<comment type="similarity">
    <text evidence="2">Belongs to the ENY2 family.</text>
</comment>
<dbReference type="EMBL" id="CU329671">
    <property type="protein sequence ID" value="CAF28466.1"/>
    <property type="molecule type" value="Genomic_DNA"/>
</dbReference>
<dbReference type="RefSeq" id="NP_001018822.1">
    <property type="nucleotide sequence ID" value="NM_001022002.2"/>
</dbReference>
<dbReference type="SMR" id="Q7LL15"/>
<dbReference type="BioGRID" id="280381">
    <property type="interactions" value="8"/>
</dbReference>
<dbReference type="FunCoup" id="Q7LL15">
    <property type="interactions" value="33"/>
</dbReference>
<dbReference type="IntAct" id="Q7LL15">
    <property type="interactions" value="2"/>
</dbReference>
<dbReference type="MINT" id="Q7LL15"/>
<dbReference type="STRING" id="284812.Q7LL15"/>
<dbReference type="iPTMnet" id="Q7LL15"/>
<dbReference type="PaxDb" id="4896-SPBC6B1.12c.1"/>
<dbReference type="EnsemblFungi" id="SPBC6B1.12c.1">
    <property type="protein sequence ID" value="SPBC6B1.12c.1:pep"/>
    <property type="gene ID" value="SPBC6B1.12c"/>
</dbReference>
<dbReference type="GeneID" id="3361305"/>
<dbReference type="KEGG" id="spo:3361305"/>
<dbReference type="PomBase" id="SPBC6B1.12c">
    <property type="gene designation" value="sus1"/>
</dbReference>
<dbReference type="VEuPathDB" id="FungiDB:SPBC6B1.12c"/>
<dbReference type="HOGENOM" id="CLU_134052_2_0_1"/>
<dbReference type="InParanoid" id="Q7LL15"/>
<dbReference type="OMA" id="ANELEYK"/>
<dbReference type="PhylomeDB" id="Q7LL15"/>
<dbReference type="PRO" id="PR:Q7LL15"/>
<dbReference type="Proteomes" id="UP000002485">
    <property type="component" value="Chromosome II"/>
</dbReference>
<dbReference type="GO" id="GO:0071819">
    <property type="term" value="C:DUBm complex"/>
    <property type="evidence" value="ECO:0000318"/>
    <property type="project" value="GO_Central"/>
</dbReference>
<dbReference type="GO" id="GO:0005643">
    <property type="term" value="C:nuclear pore"/>
    <property type="evidence" value="ECO:0007669"/>
    <property type="project" value="UniProtKB-UniRule"/>
</dbReference>
<dbReference type="GO" id="GO:0005654">
    <property type="term" value="C:nucleoplasm"/>
    <property type="evidence" value="ECO:0007669"/>
    <property type="project" value="UniProtKB-SubCell"/>
</dbReference>
<dbReference type="GO" id="GO:0000932">
    <property type="term" value="C:P-body"/>
    <property type="evidence" value="ECO:0007669"/>
    <property type="project" value="UniProtKB-SubCell"/>
</dbReference>
<dbReference type="GO" id="GO:0000124">
    <property type="term" value="C:SAGA complex"/>
    <property type="evidence" value="ECO:0000314"/>
    <property type="project" value="PomBase"/>
</dbReference>
<dbReference type="GO" id="GO:0070390">
    <property type="term" value="C:transcription export complex 2"/>
    <property type="evidence" value="ECO:0000266"/>
    <property type="project" value="PomBase"/>
</dbReference>
<dbReference type="GO" id="GO:0003682">
    <property type="term" value="F:chromatin binding"/>
    <property type="evidence" value="ECO:0000318"/>
    <property type="project" value="GO_Central"/>
</dbReference>
<dbReference type="GO" id="GO:0003713">
    <property type="term" value="F:transcription coactivator activity"/>
    <property type="evidence" value="ECO:0000318"/>
    <property type="project" value="GO_Central"/>
</dbReference>
<dbReference type="GO" id="GO:0016973">
    <property type="term" value="P:poly(A)+ mRNA export from nucleus"/>
    <property type="evidence" value="ECO:0000318"/>
    <property type="project" value="GO_Central"/>
</dbReference>
<dbReference type="GO" id="GO:0045944">
    <property type="term" value="P:positive regulation of transcription by RNA polymerase II"/>
    <property type="evidence" value="ECO:0000266"/>
    <property type="project" value="PomBase"/>
</dbReference>
<dbReference type="GO" id="GO:0015031">
    <property type="term" value="P:protein transport"/>
    <property type="evidence" value="ECO:0007669"/>
    <property type="project" value="UniProtKB-KW"/>
</dbReference>
<dbReference type="GO" id="GO:0006357">
    <property type="term" value="P:regulation of transcription by RNA polymerase II"/>
    <property type="evidence" value="ECO:0000269"/>
    <property type="project" value="PomBase"/>
</dbReference>
<dbReference type="GO" id="GO:0006368">
    <property type="term" value="P:transcription elongation by RNA polymerase II"/>
    <property type="evidence" value="ECO:0007669"/>
    <property type="project" value="UniProtKB-UniRule"/>
</dbReference>
<dbReference type="GO" id="GO:0045815">
    <property type="term" value="P:transcription initiation-coupled chromatin remodeling"/>
    <property type="evidence" value="ECO:0000305"/>
    <property type="project" value="PomBase"/>
</dbReference>
<dbReference type="Gene3D" id="1.10.246.140">
    <property type="match status" value="1"/>
</dbReference>
<dbReference type="HAMAP" id="MF_03046">
    <property type="entry name" value="ENY2_Sus1"/>
    <property type="match status" value="1"/>
</dbReference>
<dbReference type="InterPro" id="IPR018783">
    <property type="entry name" value="TF_ENY2"/>
</dbReference>
<dbReference type="InterPro" id="IPR038212">
    <property type="entry name" value="TF_EnY2_sf"/>
</dbReference>
<dbReference type="PANTHER" id="PTHR12514">
    <property type="entry name" value="ENHANCER OF YELLOW 2 TRANSCRIPTION FACTOR"/>
    <property type="match status" value="1"/>
</dbReference>
<dbReference type="Pfam" id="PF10163">
    <property type="entry name" value="EnY2"/>
    <property type="match status" value="1"/>
</dbReference>